<dbReference type="EMBL" id="J02459">
    <property type="protein sequence ID" value="AAA96544.1"/>
    <property type="molecule type" value="Genomic_DNA"/>
</dbReference>
<dbReference type="PIR" id="C43008">
    <property type="entry name" value="TLBPUL"/>
</dbReference>
<dbReference type="RefSeq" id="NP_040591.1">
    <property type="nucleotide sequence ID" value="NC_001416.1"/>
</dbReference>
<dbReference type="PDB" id="1Z1Z">
    <property type="method" value="NMR"/>
    <property type="chains" value="A=1-131"/>
</dbReference>
<dbReference type="PDB" id="3FZ2">
    <property type="method" value="X-ray"/>
    <property type="resolution" value="2.70 A"/>
    <property type="chains" value="A/B/C/D/E/F/G/H/I/J/K/L=1-131"/>
</dbReference>
<dbReference type="PDB" id="3FZB">
    <property type="method" value="X-ray"/>
    <property type="resolution" value="2.80 A"/>
    <property type="chains" value="A/B/C/D/E/F/G/H/I/J=1-131"/>
</dbReference>
<dbReference type="PDB" id="8IYD">
    <property type="method" value="EM"/>
    <property type="resolution" value="3.10 A"/>
    <property type="chains" value="G/K/Q/U/W/u=1-131"/>
</dbReference>
<dbReference type="PDB" id="8K37">
    <property type="method" value="EM"/>
    <property type="resolution" value="3.50 A"/>
    <property type="chains" value="A/B/C/D/E/F=1-131"/>
</dbReference>
<dbReference type="PDB" id="8XOW">
    <property type="method" value="EM"/>
    <property type="resolution" value="3.32 A"/>
    <property type="chains" value="U/U1/U2/U3/U4/U5=1-131"/>
</dbReference>
<dbReference type="PDB" id="8XPM">
    <property type="method" value="EM"/>
    <property type="resolution" value="3.90 A"/>
    <property type="chains" value="U/U1/U2/U3/U4/U5=1-131"/>
</dbReference>
<dbReference type="PDB" id="8XQB">
    <property type="method" value="EM"/>
    <property type="resolution" value="4.07 A"/>
    <property type="chains" value="U/U1/U2/U3/U4/U5=1-131"/>
</dbReference>
<dbReference type="PDBsum" id="1Z1Z"/>
<dbReference type="PDBsum" id="3FZ2"/>
<dbReference type="PDBsum" id="3FZB"/>
<dbReference type="PDBsum" id="8IYD"/>
<dbReference type="PDBsum" id="8K37"/>
<dbReference type="PDBsum" id="8XOW"/>
<dbReference type="PDBsum" id="8XPM"/>
<dbReference type="PDBsum" id="8XQB"/>
<dbReference type="BMRB" id="P03732"/>
<dbReference type="EMDB" id="EMD-35818"/>
<dbReference type="EMDB" id="EMD-36846"/>
<dbReference type="EMDB" id="EMD-38542"/>
<dbReference type="EMDB" id="EMD-38556"/>
<dbReference type="EMDB" id="EMD-38572"/>
<dbReference type="SMR" id="P03732"/>
<dbReference type="IntAct" id="P03732">
    <property type="interactions" value="7"/>
</dbReference>
<dbReference type="GeneID" id="2703486"/>
<dbReference type="KEGG" id="vg:2703486"/>
<dbReference type="EvolutionaryTrace" id="P03732"/>
<dbReference type="Proteomes" id="UP000001711">
    <property type="component" value="Genome"/>
</dbReference>
<dbReference type="GO" id="GO:0030430">
    <property type="term" value="C:host cell cytoplasm"/>
    <property type="evidence" value="ECO:0007669"/>
    <property type="project" value="UniProtKB-SubCell"/>
</dbReference>
<dbReference type="GO" id="GO:0098015">
    <property type="term" value="C:virus tail"/>
    <property type="evidence" value="ECO:0000314"/>
    <property type="project" value="UniProtKB"/>
</dbReference>
<dbReference type="GO" id="GO:0099001">
    <property type="term" value="P:symbiont genome ejection through host cell envelope, long flexible tail mechanism"/>
    <property type="evidence" value="ECO:0007669"/>
    <property type="project" value="UniProtKB-KW"/>
</dbReference>
<dbReference type="GO" id="GO:0098003">
    <property type="term" value="P:viral tail assembly"/>
    <property type="evidence" value="ECO:0007669"/>
    <property type="project" value="UniProtKB-KW"/>
</dbReference>
<dbReference type="FunFam" id="3.30.70.1700:FF:000001">
    <property type="entry name" value="Phage minor tail protein"/>
    <property type="match status" value="1"/>
</dbReference>
<dbReference type="Gene3D" id="3.30.70.1700">
    <property type="entry name" value="Phage minor tail protein U"/>
    <property type="match status" value="1"/>
</dbReference>
<dbReference type="InterPro" id="IPR038512">
    <property type="entry name" value="GpU-like_sf"/>
</dbReference>
<dbReference type="InterPro" id="IPR009312">
    <property type="entry name" value="Phage_lambda_GpU-like"/>
</dbReference>
<dbReference type="InterPro" id="IPR035934">
    <property type="entry name" value="Phage_tail_protein-like_sf"/>
</dbReference>
<dbReference type="Pfam" id="PF06141">
    <property type="entry name" value="Phage_tail_U"/>
    <property type="match status" value="1"/>
</dbReference>
<dbReference type="SUPFAM" id="SSF143749">
    <property type="entry name" value="Phage tail protein-like"/>
    <property type="match status" value="1"/>
</dbReference>
<feature type="chain" id="PRO_0000077670" description="Tail tube terminator protein">
    <location>
        <begin position="1"/>
        <end position="131"/>
    </location>
</feature>
<feature type="helix" evidence="5">
    <location>
        <begin position="2"/>
        <end position="17"/>
    </location>
</feature>
<feature type="strand" evidence="5">
    <location>
        <begin position="20"/>
        <end position="26"/>
    </location>
</feature>
<feature type="strand" evidence="6">
    <location>
        <begin position="29"/>
        <end position="31"/>
    </location>
</feature>
<feature type="turn" evidence="5">
    <location>
        <begin position="33"/>
        <end position="35"/>
    </location>
</feature>
<feature type="strand" evidence="5">
    <location>
        <begin position="37"/>
        <end position="50"/>
    </location>
</feature>
<feature type="strand" evidence="5">
    <location>
        <begin position="52"/>
        <end position="54"/>
    </location>
</feature>
<feature type="strand" evidence="5">
    <location>
        <begin position="57"/>
        <end position="69"/>
    </location>
</feature>
<feature type="helix" evidence="5">
    <location>
        <begin position="74"/>
        <end position="84"/>
    </location>
</feature>
<feature type="helix" evidence="5">
    <location>
        <begin position="86"/>
        <end position="89"/>
    </location>
</feature>
<feature type="helix" evidence="5">
    <location>
        <begin position="93"/>
        <end position="98"/>
    </location>
</feature>
<feature type="strand" evidence="5">
    <location>
        <begin position="100"/>
        <end position="111"/>
    </location>
</feature>
<feature type="strand" evidence="5">
    <location>
        <begin position="113"/>
        <end position="115"/>
    </location>
</feature>
<feature type="strand" evidence="5">
    <location>
        <begin position="118"/>
        <end position="130"/>
    </location>
</feature>
<organism>
    <name type="scientific">Escherichia phage lambda</name>
    <name type="common">Bacteriophage lambda</name>
    <dbReference type="NCBI Taxonomy" id="2681611"/>
    <lineage>
        <taxon>Viruses</taxon>
        <taxon>Duplodnaviria</taxon>
        <taxon>Heunggongvirae</taxon>
        <taxon>Uroviricota</taxon>
        <taxon>Caudoviricetes</taxon>
        <taxon>Lambdavirus</taxon>
        <taxon>Lambdavirus lambda</taxon>
    </lineage>
</organism>
<proteinExistence type="evidence at protein level"/>
<organismHost>
    <name type="scientific">Escherichia coli</name>
    <dbReference type="NCBI Taxonomy" id="562"/>
</organismHost>
<keyword id="KW-0002">3D-structure</keyword>
<keyword id="KW-1035">Host cytoplasm</keyword>
<keyword id="KW-0426">Late protein</keyword>
<keyword id="KW-1185">Reference proteome</keyword>
<keyword id="KW-1171">Viral genome ejection through host cell envelope</keyword>
<keyword id="KW-1243">Viral long flexible tail ejection system</keyword>
<keyword id="KW-1162">Viral penetration into host cytoplasm</keyword>
<keyword id="KW-1188">Viral release from host cell</keyword>
<keyword id="KW-1245">Viral tail assembly</keyword>
<keyword id="KW-1227">Viral tail protein</keyword>
<keyword id="KW-0946">Virion</keyword>
<keyword id="KW-1160">Virus entry into host cell</keyword>
<sequence>MKHTELRAAVLDALEKHDTGATFFDGRPAVFDEADFPAVAVYLTGAEYTGEELDSDTWQAELHIEVFLPAQVPDSELDAWMESRIYPVMSDIPALSDLITSMVASGYDYRRDDDAGLWSSADLTYVITYEM</sequence>
<evidence type="ECO:0000269" key="1">
    <source>
    </source>
</evidence>
<evidence type="ECO:0000269" key="2">
    <source>
    </source>
</evidence>
<evidence type="ECO:0000269" key="3">
    <source>
    </source>
</evidence>
<evidence type="ECO:0000305" key="4"/>
<evidence type="ECO:0007829" key="5">
    <source>
        <dbReference type="PDB" id="3FZ2"/>
    </source>
</evidence>
<evidence type="ECO:0007829" key="6">
    <source>
        <dbReference type="PDB" id="8K37"/>
    </source>
</evidence>
<accession>P03732</accession>
<name>TTTP_LAMBD</name>
<comment type="function">
    <text evidence="2">Plays an essential role in tail assembly by capping the rapidly polymerizing tail once it has reached its requisite length and serving as the interaction surface for the completion protein.</text>
</comment>
<comment type="subunit">
    <text evidence="1 3">Homohexamer. May bind to major tail protein V, and /or tape measure protein.</text>
</comment>
<comment type="subcellular location">
    <subcellularLocation>
        <location>Virion</location>
    </subcellularLocation>
    <subcellularLocation>
        <location>Host cytoplasm</location>
    </subcellularLocation>
</comment>
<comment type="similarity">
    <text evidence="4">Belongs to the lambda-like tail terminator protein family.</text>
</comment>
<gene>
    <name type="primary">U</name>
    <name type="ordered locus">lambdap12</name>
</gene>
<reference key="1">
    <citation type="journal article" date="1982" name="J. Mol. Biol.">
        <title>Nucleotide sequence of bacteriophage lambda DNA.</title>
        <authorList>
            <person name="Sanger F."/>
            <person name="Coulson A.R."/>
            <person name="Hong G.F."/>
            <person name="Hill D.F."/>
            <person name="Petersen G.B."/>
        </authorList>
    </citation>
    <scope>NUCLEOTIDE SEQUENCE [LARGE SCALE GENOMIC DNA]</scope>
</reference>
<reference key="2">
    <citation type="journal article" date="1977" name="Virology">
        <title>Purification and characterization of the major protein and the terminator protein of the bacteriophage lambda tail.</title>
        <authorList>
            <person name="Katsura I."/>
            <person name="Tsugita A."/>
        </authorList>
    </citation>
    <scope>CHARACTERIZATION</scope>
    <scope>SUBUNIT</scope>
    <scope>SUBCELLULAR LOCATION</scope>
</reference>
<reference key="3">
    <citation type="journal article" date="1990" name="Adv. Biophys.">
        <title>Mechanism of length determination in bacteriophage lambda tails.</title>
        <authorList>
            <person name="Katsura I."/>
        </authorList>
    </citation>
    <scope>FUNCTION</scope>
    <scope>SUBCELLULAR LOCATION</scope>
</reference>
<reference key="4">
    <citation type="journal article" date="2007" name="J. Mol. Biol.">
        <title>The NMR structure of the gpU tail-terminator protein from bacteriophage lambda: identification of sites contributing to Mg(II)-mediated oligomerization and biological function.</title>
        <authorList>
            <person name="Edmonds L."/>
            <person name="Liu A."/>
            <person name="Kwan J.J."/>
            <person name="Avanessy A."/>
            <person name="Caracoglia M."/>
            <person name="Yang I."/>
            <person name="Maxwell K.L."/>
            <person name="Rubenstein J."/>
            <person name="Davidson A.R."/>
            <person name="Donaldson L.W."/>
        </authorList>
    </citation>
    <scope>STRUCTURE BY NMR</scope>
</reference>
<reference key="5">
    <citation type="journal article" date="2009" name="J. Mol. Biol.">
        <title>The X-ray crystal structure of the phage lambda tail terminator protein reveals the biologically relevant hexameric ring structure and demonstrates a conserved mechanism of tail termination among diverse long-tailed phages.</title>
        <authorList>
            <person name="Pell L.G."/>
            <person name="Liu A."/>
            <person name="Edmonds L."/>
            <person name="Donaldson L.W."/>
            <person name="Howell P.L."/>
            <person name="Davidson A.R."/>
        </authorList>
    </citation>
    <scope>X-RAY CRYSTALLOGRAPHY (2.8 ANGSTROMS)</scope>
    <scope>SUBUNIT</scope>
</reference>
<protein>
    <recommendedName>
        <fullName evidence="4">Tail tube terminator protein</fullName>
        <shortName>TrP</shortName>
    </recommendedName>
    <alternativeName>
        <fullName>Gene product U</fullName>
        <shortName>gpU</shortName>
    </alternativeName>
    <alternativeName>
        <fullName>Minor tail protein U</fullName>
    </alternativeName>
    <alternativeName>
        <fullName evidence="4">Tail sheath-stabilizing protein</fullName>
    </alternativeName>
    <alternativeName>
        <fullName>Tail-to-head joining protein</fullName>
        <shortName>THJP</shortName>
    </alternativeName>
</protein>